<dbReference type="EMBL" id="BT020929">
    <property type="protein sequence ID" value="AAX08946.1"/>
    <property type="molecule type" value="mRNA"/>
</dbReference>
<dbReference type="EMBL" id="BC102955">
    <property type="protein sequence ID" value="AAI02956.1"/>
    <property type="molecule type" value="mRNA"/>
</dbReference>
<dbReference type="RefSeq" id="NP_001014860.1">
    <property type="nucleotide sequence ID" value="NM_001014860.3"/>
</dbReference>
<dbReference type="RefSeq" id="XP_005226302.1">
    <property type="nucleotide sequence ID" value="XM_005226245.3"/>
</dbReference>
<dbReference type="RefSeq" id="XP_005226303.1">
    <property type="nucleotide sequence ID" value="XM_005226246.5"/>
</dbReference>
<dbReference type="RefSeq" id="XP_005226304.1">
    <property type="nucleotide sequence ID" value="XM_005226247.5"/>
</dbReference>
<dbReference type="RefSeq" id="XP_005226306.1">
    <property type="nucleotide sequence ID" value="XM_005226249.5"/>
</dbReference>
<dbReference type="RefSeq" id="XP_005226307.1">
    <property type="nucleotide sequence ID" value="XM_005226250.5"/>
</dbReference>
<dbReference type="RefSeq" id="XP_005226308.1">
    <property type="nucleotide sequence ID" value="XM_005226251.3"/>
</dbReference>
<dbReference type="RefSeq" id="XP_005226309.1">
    <property type="nucleotide sequence ID" value="XM_005226252.5"/>
</dbReference>
<dbReference type="RefSeq" id="XP_010818754.1">
    <property type="nucleotide sequence ID" value="XM_010820452.2"/>
</dbReference>
<dbReference type="RefSeq" id="XP_010818755.1">
    <property type="nucleotide sequence ID" value="XM_010820453.2"/>
</dbReference>
<dbReference type="RefSeq" id="XP_010818756.1">
    <property type="nucleotide sequence ID" value="XM_010820454.2"/>
</dbReference>
<dbReference type="RefSeq" id="XP_010818757.1">
    <property type="nucleotide sequence ID" value="XM_010820455.4"/>
</dbReference>
<dbReference type="RefSeq" id="XP_015316432.1">
    <property type="nucleotide sequence ID" value="XM_015460946.1"/>
</dbReference>
<dbReference type="RefSeq" id="XP_024842384.1">
    <property type="nucleotide sequence ID" value="XM_024986616.2"/>
</dbReference>
<dbReference type="RefSeq" id="XP_024842385.1">
    <property type="nucleotide sequence ID" value="XM_024986617.2"/>
</dbReference>
<dbReference type="RefSeq" id="XP_024842387.1">
    <property type="nucleotide sequence ID" value="XM_024986619.2"/>
</dbReference>
<dbReference type="RefSeq" id="XP_059738450.1">
    <property type="nucleotide sequence ID" value="XM_059882467.1"/>
</dbReference>
<dbReference type="RefSeq" id="XP_059738451.1">
    <property type="nucleotide sequence ID" value="XM_059882468.1"/>
</dbReference>
<dbReference type="RefSeq" id="XP_059738452.1">
    <property type="nucleotide sequence ID" value="XM_059882469.1"/>
</dbReference>
<dbReference type="RefSeq" id="XP_059738453.1">
    <property type="nucleotide sequence ID" value="XM_059882470.1"/>
</dbReference>
<dbReference type="RefSeq" id="XP_059738454.1">
    <property type="nucleotide sequence ID" value="XM_059882471.1"/>
</dbReference>
<dbReference type="RefSeq" id="XP_059738455.1">
    <property type="nucleotide sequence ID" value="XM_059882472.1"/>
</dbReference>
<dbReference type="RefSeq" id="XP_059738456.1">
    <property type="nucleotide sequence ID" value="XM_059882473.1"/>
</dbReference>
<dbReference type="RefSeq" id="XP_059738457.1">
    <property type="nucleotide sequence ID" value="XM_059882474.1"/>
</dbReference>
<dbReference type="RefSeq" id="XP_059738458.1">
    <property type="nucleotide sequence ID" value="XM_059882475.1"/>
</dbReference>
<dbReference type="RefSeq" id="XP_059738459.1">
    <property type="nucleotide sequence ID" value="XM_059882476.1"/>
</dbReference>
<dbReference type="RefSeq" id="XP_059738460.1">
    <property type="nucleotide sequence ID" value="XM_059882477.1"/>
</dbReference>
<dbReference type="SMR" id="Q5E9J1"/>
<dbReference type="FunCoup" id="Q5E9J1">
    <property type="interactions" value="4626"/>
</dbReference>
<dbReference type="STRING" id="9913.ENSBTAP00000011658"/>
<dbReference type="PaxDb" id="9913-ENSBTAP00000011658"/>
<dbReference type="PeptideAtlas" id="Q5E9J1"/>
<dbReference type="Ensembl" id="ENSBTAT00000011658.6">
    <property type="protein sequence ID" value="ENSBTAP00000011658.4"/>
    <property type="gene ID" value="ENSBTAG00000008853.6"/>
</dbReference>
<dbReference type="Ensembl" id="ENSBTAT00000095286.1">
    <property type="protein sequence ID" value="ENSBTAP00000103818.1"/>
    <property type="gene ID" value="ENSBTAG00000008853.6"/>
</dbReference>
<dbReference type="Ensembl" id="ENSBTAT00000109928.1">
    <property type="protein sequence ID" value="ENSBTAP00000102749.1"/>
    <property type="gene ID" value="ENSBTAG00000008853.6"/>
</dbReference>
<dbReference type="Ensembl" id="ENSBTAT00000115241.1">
    <property type="protein sequence ID" value="ENSBTAP00000096821.1"/>
    <property type="gene ID" value="ENSBTAG00000008853.6"/>
</dbReference>
<dbReference type="Ensembl" id="ENSBTAT00000119826.1">
    <property type="protein sequence ID" value="ENSBTAP00000083320.1"/>
    <property type="gene ID" value="ENSBTAG00000008853.6"/>
</dbReference>
<dbReference type="Ensembl" id="ENSBTAT00000125598.1">
    <property type="protein sequence ID" value="ENSBTAP00000075964.1"/>
    <property type="gene ID" value="ENSBTAG00000008853.6"/>
</dbReference>
<dbReference type="Ensembl" id="ENSBTAT00000129153.1">
    <property type="protein sequence ID" value="ENSBTAP00000099480.1"/>
    <property type="gene ID" value="ENSBTAG00000008853.6"/>
</dbReference>
<dbReference type="Ensembl" id="ENSBTAT00000133158.1">
    <property type="protein sequence ID" value="ENSBTAP00000094641.1"/>
    <property type="gene ID" value="ENSBTAG00000008853.6"/>
</dbReference>
<dbReference type="Ensembl" id="ENSBTAT00000134330.1">
    <property type="protein sequence ID" value="ENSBTAP00000081127.1"/>
    <property type="gene ID" value="ENSBTAG00000008853.6"/>
</dbReference>
<dbReference type="Ensembl" id="ENSBTAT00000134904.1">
    <property type="protein sequence ID" value="ENSBTAP00000094894.1"/>
    <property type="gene ID" value="ENSBTAG00000008853.6"/>
</dbReference>
<dbReference type="GeneID" id="506917"/>
<dbReference type="KEGG" id="bta:506917"/>
<dbReference type="CTD" id="3185"/>
<dbReference type="VEuPathDB" id="HostDB:ENSBTAG00000008853"/>
<dbReference type="eggNOG" id="KOG4211">
    <property type="taxonomic scope" value="Eukaryota"/>
</dbReference>
<dbReference type="GeneTree" id="ENSGT00940000157838"/>
<dbReference type="HOGENOM" id="CLU_032003_1_0_1"/>
<dbReference type="InParanoid" id="Q5E9J1"/>
<dbReference type="OMA" id="YYNDEYE"/>
<dbReference type="OrthoDB" id="431068at2759"/>
<dbReference type="TreeFam" id="TF316157"/>
<dbReference type="Reactome" id="R-BTA-72163">
    <property type="pathway name" value="mRNA Splicing - Major Pathway"/>
</dbReference>
<dbReference type="Reactome" id="R-BTA-72203">
    <property type="pathway name" value="Processing of Capped Intron-Containing Pre-mRNA"/>
</dbReference>
<dbReference type="Proteomes" id="UP000009136">
    <property type="component" value="Chromosome 28"/>
</dbReference>
<dbReference type="Bgee" id="ENSBTAG00000008853">
    <property type="expression patterns" value="Expressed in blood and 104 other cell types or tissues"/>
</dbReference>
<dbReference type="GO" id="GO:0005654">
    <property type="term" value="C:nucleoplasm"/>
    <property type="evidence" value="ECO:0000318"/>
    <property type="project" value="GO_Central"/>
</dbReference>
<dbReference type="GO" id="GO:1990904">
    <property type="term" value="C:ribonucleoprotein complex"/>
    <property type="evidence" value="ECO:0000318"/>
    <property type="project" value="GO_Central"/>
</dbReference>
<dbReference type="GO" id="GO:0005681">
    <property type="term" value="C:spliceosomal complex"/>
    <property type="evidence" value="ECO:0007669"/>
    <property type="project" value="UniProtKB-KW"/>
</dbReference>
<dbReference type="GO" id="GO:0003723">
    <property type="term" value="F:RNA binding"/>
    <property type="evidence" value="ECO:0000318"/>
    <property type="project" value="GO_Central"/>
</dbReference>
<dbReference type="GO" id="GO:0003727">
    <property type="term" value="F:single-stranded RNA binding"/>
    <property type="evidence" value="ECO:0000250"/>
    <property type="project" value="UniProtKB"/>
</dbReference>
<dbReference type="GO" id="GO:0006397">
    <property type="term" value="P:mRNA processing"/>
    <property type="evidence" value="ECO:0007669"/>
    <property type="project" value="UniProtKB-KW"/>
</dbReference>
<dbReference type="GO" id="GO:0043484">
    <property type="term" value="P:regulation of RNA splicing"/>
    <property type="evidence" value="ECO:0000250"/>
    <property type="project" value="UniProtKB"/>
</dbReference>
<dbReference type="GO" id="GO:0008380">
    <property type="term" value="P:RNA splicing"/>
    <property type="evidence" value="ECO:0007669"/>
    <property type="project" value="UniProtKB-KW"/>
</dbReference>
<dbReference type="CDD" id="cd12729">
    <property type="entry name" value="RRM1_hnRNPH_hnRNPH2_hnRNPF"/>
    <property type="match status" value="1"/>
</dbReference>
<dbReference type="CDD" id="cd12731">
    <property type="entry name" value="RRM2_hnRNPH_hnRNPH2_hnRNPF"/>
    <property type="match status" value="1"/>
</dbReference>
<dbReference type="CDD" id="cd12506">
    <property type="entry name" value="RRM3_hnRNPH_CRSF1_like"/>
    <property type="match status" value="1"/>
</dbReference>
<dbReference type="FunFam" id="3.30.70.330:FF:000071">
    <property type="entry name" value="heterogeneous nuclear ribonucleoprotein H isoform X1"/>
    <property type="match status" value="1"/>
</dbReference>
<dbReference type="FunFam" id="3.30.70.330:FF:000075">
    <property type="entry name" value="Heterogeneous nuclear ribonucleoprotein H1 (H)"/>
    <property type="match status" value="1"/>
</dbReference>
<dbReference type="FunFam" id="3.30.70.330:FF:000031">
    <property type="entry name" value="Heterogeneous nuclear ribonucleoprotein h3 isoform"/>
    <property type="match status" value="1"/>
</dbReference>
<dbReference type="Gene3D" id="3.30.70.330">
    <property type="match status" value="3"/>
</dbReference>
<dbReference type="InterPro" id="IPR050666">
    <property type="entry name" value="ESRP"/>
</dbReference>
<dbReference type="InterPro" id="IPR012677">
    <property type="entry name" value="Nucleotide-bd_a/b_plait_sf"/>
</dbReference>
<dbReference type="InterPro" id="IPR035979">
    <property type="entry name" value="RBD_domain_sf"/>
</dbReference>
<dbReference type="InterPro" id="IPR000504">
    <property type="entry name" value="RRM_dom"/>
</dbReference>
<dbReference type="InterPro" id="IPR012996">
    <property type="entry name" value="Znf_CHHC"/>
</dbReference>
<dbReference type="PANTHER" id="PTHR13976">
    <property type="entry name" value="HETEROGENEOUS NUCLEAR RIBONUCLEOPROTEIN-RELATED"/>
    <property type="match status" value="1"/>
</dbReference>
<dbReference type="Pfam" id="PF00076">
    <property type="entry name" value="RRM_1"/>
    <property type="match status" value="2"/>
</dbReference>
<dbReference type="Pfam" id="PF08080">
    <property type="entry name" value="zf-RNPHF"/>
    <property type="match status" value="1"/>
</dbReference>
<dbReference type="SMART" id="SM00360">
    <property type="entry name" value="RRM"/>
    <property type="match status" value="3"/>
</dbReference>
<dbReference type="SUPFAM" id="SSF54928">
    <property type="entry name" value="RNA-binding domain, RBD"/>
    <property type="match status" value="3"/>
</dbReference>
<dbReference type="PROSITE" id="PS50102">
    <property type="entry name" value="RRM"/>
    <property type="match status" value="3"/>
</dbReference>
<proteinExistence type="evidence at transcript level"/>
<accession>Q5E9J1</accession>
<organism>
    <name type="scientific">Bos taurus</name>
    <name type="common">Bovine</name>
    <dbReference type="NCBI Taxonomy" id="9913"/>
    <lineage>
        <taxon>Eukaryota</taxon>
        <taxon>Metazoa</taxon>
        <taxon>Chordata</taxon>
        <taxon>Craniata</taxon>
        <taxon>Vertebrata</taxon>
        <taxon>Euteleostomi</taxon>
        <taxon>Mammalia</taxon>
        <taxon>Eutheria</taxon>
        <taxon>Laurasiatheria</taxon>
        <taxon>Artiodactyla</taxon>
        <taxon>Ruminantia</taxon>
        <taxon>Pecora</taxon>
        <taxon>Bovidae</taxon>
        <taxon>Bovinae</taxon>
        <taxon>Bos</taxon>
    </lineage>
</organism>
<feature type="chain" id="PRO_0000253052" description="Heterogeneous nuclear ribonucleoprotein F">
    <location>
        <begin position="1"/>
        <end position="414"/>
    </location>
</feature>
<feature type="initiator methionine" description="Removed; alternate" evidence="2">
    <location>
        <position position="1"/>
    </location>
</feature>
<feature type="chain" id="PRO_0000367113" description="Heterogeneous nuclear ribonucleoprotein F, N-terminally processed">
    <location>
        <begin position="2"/>
        <end position="414"/>
    </location>
</feature>
<feature type="domain" description="RRM 1" evidence="5">
    <location>
        <begin position="11"/>
        <end position="90"/>
    </location>
</feature>
<feature type="domain" description="RRM 2" evidence="5">
    <location>
        <begin position="111"/>
        <end position="188"/>
    </location>
</feature>
<feature type="domain" description="RRM 3" evidence="5">
    <location>
        <begin position="289"/>
        <end position="366"/>
    </location>
</feature>
<feature type="region of interest" description="Interaction with RNA" evidence="1">
    <location>
        <begin position="81"/>
        <end position="86"/>
    </location>
</feature>
<feature type="region of interest" description="Interaction with RNA" evidence="1">
    <location>
        <begin position="179"/>
        <end position="184"/>
    </location>
</feature>
<feature type="region of interest" description="Interaction with RNA" evidence="1">
    <location>
        <begin position="355"/>
        <end position="360"/>
    </location>
</feature>
<feature type="site" description="Interaction with RNA" evidence="1">
    <location>
        <position position="16"/>
    </location>
</feature>
<feature type="site" description="Interaction with RNA" evidence="1">
    <location>
        <position position="20"/>
    </location>
</feature>
<feature type="site" description="Interaction with RNA" evidence="1">
    <location>
        <position position="52"/>
    </location>
</feature>
<feature type="site" description="Interaction with RNA" evidence="1">
    <location>
        <position position="75"/>
    </location>
</feature>
<feature type="site" description="Interaction with RNA" evidence="1">
    <location>
        <position position="116"/>
    </location>
</feature>
<feature type="site" description="Interaction with RNA" evidence="1">
    <location>
        <position position="120"/>
    </location>
</feature>
<feature type="site" description="Interaction with RNA" evidence="1">
    <location>
        <position position="150"/>
    </location>
</feature>
<feature type="site" description="Interaction with RNA" evidence="1">
    <location>
        <position position="173"/>
    </location>
</feature>
<feature type="site" description="Interaction with RNA" evidence="1">
    <location>
        <position position="294"/>
    </location>
</feature>
<feature type="site" description="Interaction with RNA" evidence="1">
    <location>
        <position position="298"/>
    </location>
</feature>
<feature type="site" description="Interaction with RNA" evidence="1">
    <location>
        <position position="326"/>
    </location>
</feature>
<feature type="site" description="Interaction with RNA" evidence="1">
    <location>
        <position position="349"/>
    </location>
</feature>
<feature type="modified residue" description="N-acetylmethionine" evidence="2">
    <location>
        <position position="1"/>
    </location>
</feature>
<feature type="modified residue" description="N-acetylmethionine; in Heterogeneous nuclear ribonucleoprotein F, N-terminally processed" evidence="2">
    <location>
        <position position="2"/>
    </location>
</feature>
<feature type="modified residue" description="Phosphoserine" evidence="2">
    <location>
        <position position="104"/>
    </location>
</feature>
<feature type="modified residue" description="Phosphoserine" evidence="2">
    <location>
        <position position="161"/>
    </location>
</feature>
<feature type="modified residue" description="Phosphoserine" evidence="2">
    <location>
        <position position="187"/>
    </location>
</feature>
<feature type="modified residue" description="Phosphoserine" evidence="2">
    <location>
        <position position="193"/>
    </location>
</feature>
<feature type="modified residue" description="Phosphoserine" evidence="3">
    <location>
        <position position="195"/>
    </location>
</feature>
<feature type="modified residue" description="N6-acetyllysine; alternate" evidence="4">
    <location>
        <position position="200"/>
    </location>
</feature>
<feature type="modified residue" description="Phosphothreonine" evidence="2">
    <location>
        <position position="215"/>
    </location>
</feature>
<feature type="modified residue" description="N6-acetyllysine; alternate" evidence="2">
    <location>
        <position position="224"/>
    </location>
</feature>
<feature type="modified residue" description="Phosphoserine" evidence="2">
    <location>
        <position position="265"/>
    </location>
</feature>
<feature type="cross-link" description="Glycyl lysine isopeptide (Lys-Gly) (interchain with G-Cter in SUMO)" evidence="1">
    <location>
        <position position="72"/>
    </location>
</feature>
<feature type="cross-link" description="Glycyl lysine isopeptide (Lys-Gly) (interchain with G-Cter in SUMO2)" evidence="2">
    <location>
        <position position="87"/>
    </location>
</feature>
<feature type="cross-link" description="Glycyl lysine isopeptide (Lys-Gly) (interchain with G-Cter in SUMO2)" evidence="2">
    <location>
        <position position="167"/>
    </location>
</feature>
<feature type="cross-link" description="Glycyl lysine isopeptide (Lys-Gly) (interchain with G-Cter in SUMO2)" evidence="2">
    <location>
        <position position="185"/>
    </location>
</feature>
<feature type="cross-link" description="Glycyl lysine isopeptide (Lys-Gly) (interchain with G-Cter in SUMO2); alternate" evidence="2">
    <location>
        <position position="200"/>
    </location>
</feature>
<feature type="cross-link" description="Glycyl lysine isopeptide (Lys-Gly) (interchain with G-Cter in SUMO2); alternate" evidence="2">
    <location>
        <position position="224"/>
    </location>
</feature>
<evidence type="ECO:0000250" key="1"/>
<evidence type="ECO:0000250" key="2">
    <source>
        <dbReference type="UniProtKB" id="P52597"/>
    </source>
</evidence>
<evidence type="ECO:0000250" key="3">
    <source>
        <dbReference type="UniProtKB" id="Q794E4"/>
    </source>
</evidence>
<evidence type="ECO:0000250" key="4">
    <source>
        <dbReference type="UniProtKB" id="Q9Z2X1"/>
    </source>
</evidence>
<evidence type="ECO:0000255" key="5">
    <source>
        <dbReference type="PROSITE-ProRule" id="PRU00176"/>
    </source>
</evidence>
<gene>
    <name type="primary">HNRNPF</name>
    <name type="synonym">HNRPF</name>
</gene>
<name>HNRPF_BOVIN</name>
<protein>
    <recommendedName>
        <fullName>Heterogeneous nuclear ribonucleoprotein F</fullName>
        <shortName>hnRNP F</shortName>
    </recommendedName>
    <component>
        <recommendedName>
            <fullName>Heterogeneous nuclear ribonucleoprotein F, N-terminally processed</fullName>
        </recommendedName>
    </component>
</protein>
<reference key="1">
    <citation type="journal article" date="2005" name="BMC Genomics">
        <title>Characterization of 954 bovine full-CDS cDNA sequences.</title>
        <authorList>
            <person name="Harhay G.P."/>
            <person name="Sonstegard T.S."/>
            <person name="Keele J.W."/>
            <person name="Heaton M.P."/>
            <person name="Clawson M.L."/>
            <person name="Snelling W.M."/>
            <person name="Wiedmann R.T."/>
            <person name="Van Tassell C.P."/>
            <person name="Smith T.P.L."/>
        </authorList>
    </citation>
    <scope>NUCLEOTIDE SEQUENCE [LARGE SCALE MRNA]</scope>
</reference>
<reference key="2">
    <citation type="submission" date="2005-08" db="EMBL/GenBank/DDBJ databases">
        <authorList>
            <consortium name="NIH - Mammalian Gene Collection (MGC) project"/>
        </authorList>
    </citation>
    <scope>NUCLEOTIDE SEQUENCE [LARGE SCALE MRNA]</scope>
    <source>
        <strain>Crossbred X Angus</strain>
        <tissue>Ileum</tissue>
    </source>
</reference>
<keyword id="KW-0007">Acetylation</keyword>
<keyword id="KW-1017">Isopeptide bond</keyword>
<keyword id="KW-0507">mRNA processing</keyword>
<keyword id="KW-0508">mRNA splicing</keyword>
<keyword id="KW-0539">Nucleus</keyword>
<keyword id="KW-0597">Phosphoprotein</keyword>
<keyword id="KW-1185">Reference proteome</keyword>
<keyword id="KW-0677">Repeat</keyword>
<keyword id="KW-0687">Ribonucleoprotein</keyword>
<keyword id="KW-0694">RNA-binding</keyword>
<keyword id="KW-0747">Spliceosome</keyword>
<keyword id="KW-0832">Ubl conjugation</keyword>
<comment type="function">
    <text evidence="1">Component of the heterogeneous nuclear ribonucleoprotein (hnRNP) complexes which provide the substrate for the processing events that pre-mRNAs undergo before becoming functional, translatable mRNAs in the cytoplasm. Plays a role in the regulation of alternative splicing events. Binds G-rich sequences in pre-mRNAs and keeps target RNA in an unfolded state (By similarity).</text>
</comment>
<comment type="subunit">
    <text evidence="1">Identified in the spliceosome C complex. Interacts with AGO1, AGO2, TBP and TXNL4/DIM1 (By similarity).</text>
</comment>
<comment type="subcellular location">
    <subcellularLocation>
        <location evidence="1">Nucleus</location>
        <location evidence="1">Nucleoplasm</location>
    </subcellularLocation>
</comment>
<comment type="domain">
    <text evidence="1">The N-terminal RRM domains are responsible for recognizing the G-tract of BCL-X RNA.</text>
</comment>
<comment type="PTM">
    <text evidence="1">Sumoylated.</text>
</comment>
<sequence length="414" mass="45689">MMLGPEGGEGFVVKLRGLPWSCSVEDVQNFLSDCTIHDGVAGVHFIYTREGRQSGEAFVELESEDDVKLALKKDRESMGHRYIEVFKSHRTEMDWVLKHSGPNSADTANDGFVRLRGLPFGCTKEEIIQFFSGLEIVPNGITLPVDPEGKITGEAFVQFASQELAEKALGKHKERIGHRYIEVFKSSQEEVRSYSDPPLKFMSVQRPGPYDRPGTARRYIGIVKQAGLERMRSGAYSAGYGGYEEYSGLSDGYGFTTDLFGRDLSYCLSGMYDHRYGDGEFTVQSTTGHCVHMRGLPYKATENDIYNFFSPLNPVRVHIEIGPDGRVTGEADVEFATHEEAVAAMSKDRANMQHRYIELFLNSTTGASNGAYSSQMMQGMGVSTQSTYSGLESQSVSGCYGAGYGGQNSMGGYD</sequence>